<dbReference type="EMBL" id="U11804">
    <property type="protein sequence ID" value="AAA76596.1"/>
    <property type="molecule type" value="Genomic_DNA"/>
</dbReference>
<dbReference type="GO" id="GO:0005634">
    <property type="term" value="C:nucleus"/>
    <property type="evidence" value="ECO:0007669"/>
    <property type="project" value="UniProtKB-SubCell"/>
</dbReference>
<dbReference type="GO" id="GO:0048471">
    <property type="term" value="C:perinuclear region of cytoplasm"/>
    <property type="evidence" value="ECO:0007669"/>
    <property type="project" value="UniProtKB-SubCell"/>
</dbReference>
<dbReference type="GO" id="GO:0048511">
    <property type="term" value="P:rhythmic process"/>
    <property type="evidence" value="ECO:0007669"/>
    <property type="project" value="UniProtKB-KW"/>
</dbReference>
<protein>
    <recommendedName>
        <fullName>Period circadian protein</fullName>
    </recommendedName>
</protein>
<feature type="chain" id="PRO_0000162625" description="Period circadian protein">
    <location>
        <begin position="1" status="less than"/>
        <end position="109" status="greater than"/>
    </location>
</feature>
<feature type="region of interest" description="Disordered" evidence="2">
    <location>
        <begin position="59"/>
        <end position="109"/>
    </location>
</feature>
<feature type="compositionally biased region" description="Low complexity" evidence="2">
    <location>
        <begin position="69"/>
        <end position="98"/>
    </location>
</feature>
<feature type="non-terminal residue">
    <location>
        <position position="1"/>
    </location>
</feature>
<feature type="non-terminal residue">
    <location>
        <position position="109"/>
    </location>
</feature>
<evidence type="ECO:0000250" key="1"/>
<evidence type="ECO:0000256" key="2">
    <source>
        <dbReference type="SAM" id="MobiDB-lite"/>
    </source>
</evidence>
<reference key="1">
    <citation type="journal article" date="1994" name="Mol. Biol. Evol.">
        <title>Big flies, small repeats: the 'Thr-Gly' region of the period gene in Diptera.</title>
        <authorList>
            <person name="Nielsen J."/>
            <person name="Peixoto A.A."/>
            <person name="Piccin A."/>
            <person name="Costa R."/>
            <person name="Kyriacou C.P."/>
            <person name="Chalmers D."/>
        </authorList>
    </citation>
    <scope>NUCLEOTIDE SEQUENCE [GENOMIC DNA]</scope>
</reference>
<gene>
    <name type="primary">per</name>
</gene>
<organism>
    <name type="scientific">Syritta pipiens</name>
    <name type="common">Hoverfly</name>
    <dbReference type="NCBI Taxonomy" id="34682"/>
    <lineage>
        <taxon>Eukaryota</taxon>
        <taxon>Metazoa</taxon>
        <taxon>Ecdysozoa</taxon>
        <taxon>Arthropoda</taxon>
        <taxon>Hexapoda</taxon>
        <taxon>Insecta</taxon>
        <taxon>Pterygota</taxon>
        <taxon>Neoptera</taxon>
        <taxon>Endopterygota</taxon>
        <taxon>Diptera</taxon>
        <taxon>Brachycera</taxon>
        <taxon>Muscomorpha</taxon>
        <taxon>Syrphoidea</taxon>
        <taxon>Syrphidae</taxon>
        <taxon>Eristalinae</taxon>
        <taxon>Xylotini</taxon>
        <taxon>Syritta</taxon>
    </lineage>
</organism>
<name>PER_SYRPI</name>
<accession>Q26612</accession>
<proteinExistence type="inferred from homology"/>
<comment type="function">
    <text evidence="1">Essential for biological clock functions. Determines the period length of circadian and ultradian rhythms; an increase in PER dosage leads to shortened circadian rhythms and a decrease leads to lengthened circadian rhythms. Essential for the circadian rhythmicity of locomotor activity, eclosion behavior, and for the rhythmic component of the male courtship song that originates in the thoracic nervous system. The biological cycle depends on the rhythmic formation and nuclear localization of the TIM-PER complex. Light induces the degradation of TIM, which promotes elimination of PER. Nuclear activity of the heterodimer coordinatively regulates PER and TIM transcription through a negative feedback loop. Behaves as a negative element in circadian transcriptional loop. Does not appear to bind DNA, suggesting indirect transcriptional inhibition (By similarity).</text>
</comment>
<comment type="subunit">
    <text evidence="1">Forms a heterodimer with timeless (TIM); the complex then translocates into the nucleus.</text>
</comment>
<comment type="subcellular location">
    <subcellularLocation>
        <location evidence="1">Nucleus</location>
    </subcellularLocation>
    <subcellularLocation>
        <location evidence="1">Cytoplasm</location>
        <location evidence="1">Perinuclear region</location>
    </subcellularLocation>
    <text evidence="1">Nuclear at specific periods of the day. First accumulates in the perinuclear region about one hour before translocation into the nucleus. Interaction with Tim is required for nuclear localization (By similarity).</text>
</comment>
<comment type="PTM">
    <text evidence="1">Phosphorylated with a circadian rhythmicity, probably by the double-time protein (dbt). Phosphorylation could be implicated in the stability of per monomer and in the formation of heterodimer per-tim (By similarity).</text>
</comment>
<sequence length="109" mass="11525">SKSSTETPPSYNQLNYNENLQRFFNSKPATAPVEFDPIKMDQSYNEPAEAECTVSPVQCFEGSGGSGSSGNFTSGSNLNMRSVTNTSNTGTGTSSESVPLVTLTEALIS</sequence>
<keyword id="KW-0090">Biological rhythms</keyword>
<keyword id="KW-0963">Cytoplasm</keyword>
<keyword id="KW-0539">Nucleus</keyword>
<keyword id="KW-0597">Phosphoprotein</keyword>
<keyword id="KW-0677">Repeat</keyword>